<comment type="function">
    <text>Alpha-amylase inhibitor.</text>
</comment>
<comment type="subcellular location">
    <subcellularLocation>
        <location>Secreted</location>
    </subcellularLocation>
</comment>
<comment type="similarity">
    <text evidence="2">Belongs to the protease inhibitor I6 (cereal trypsin/alpha-amylase inhibitor) family.</text>
</comment>
<organism>
    <name type="scientific">Sorghum bicolor</name>
    <name type="common">Sorghum</name>
    <name type="synonym">Sorghum vulgare</name>
    <dbReference type="NCBI Taxonomy" id="4558"/>
    <lineage>
        <taxon>Eukaryota</taxon>
        <taxon>Viridiplantae</taxon>
        <taxon>Streptophyta</taxon>
        <taxon>Embryophyta</taxon>
        <taxon>Tracheophyta</taxon>
        <taxon>Spermatophyta</taxon>
        <taxon>Magnoliopsida</taxon>
        <taxon>Liliopsida</taxon>
        <taxon>Poales</taxon>
        <taxon>Poaceae</taxon>
        <taxon>PACMAD clade</taxon>
        <taxon>Panicoideae</taxon>
        <taxon>Andropogonodae</taxon>
        <taxon>Andropogoneae</taxon>
        <taxon>Sorghinae</taxon>
        <taxon>Sorghum</taxon>
    </lineage>
</organism>
<sequence>ANWCEPGLVIPLNPLPSCRTYMVRRACGVSIGPVVPLPVLKERCCSELEKLVPYCRCGALRTALDSMMTGYEMRPTCSWGGLLTFAPTIVCYRECNLRTLHGRPFCYALGAEGTTT</sequence>
<feature type="chain" id="PRO_0000070494" description="Alpha-amylase inhibitor 5">
    <location>
        <begin position="1"/>
        <end position="116"/>
    </location>
</feature>
<feature type="disulfide bond" evidence="1">
    <location>
        <begin position="4"/>
        <end position="55"/>
    </location>
</feature>
<feature type="disulfide bond" evidence="1">
    <location>
        <begin position="18"/>
        <end position="44"/>
    </location>
</feature>
<feature type="disulfide bond" evidence="1">
    <location>
        <begin position="27"/>
        <end position="77"/>
    </location>
</feature>
<feature type="disulfide bond" evidence="1">
    <location>
        <begin position="45"/>
        <end position="95"/>
    </location>
</feature>
<feature type="disulfide bond" evidence="1">
    <location>
        <begin position="57"/>
        <end position="106"/>
    </location>
</feature>
<name>IAA5_SORBI</name>
<dbReference type="PIR" id="S28202">
    <property type="entry name" value="S28202"/>
</dbReference>
<dbReference type="SMR" id="P81368"/>
<dbReference type="ExpressionAtlas" id="P81368">
    <property type="expression patterns" value="baseline"/>
</dbReference>
<dbReference type="GO" id="GO:0005576">
    <property type="term" value="C:extracellular region"/>
    <property type="evidence" value="ECO:0007669"/>
    <property type="project" value="UniProtKB-SubCell"/>
</dbReference>
<dbReference type="GO" id="GO:0015066">
    <property type="term" value="F:alpha-amylase inhibitor activity"/>
    <property type="evidence" value="ECO:0007669"/>
    <property type="project" value="UniProtKB-KW"/>
</dbReference>
<dbReference type="GO" id="GO:0004867">
    <property type="term" value="F:serine-type endopeptidase inhibitor activity"/>
    <property type="evidence" value="ECO:0007669"/>
    <property type="project" value="InterPro"/>
</dbReference>
<dbReference type="CDD" id="cd00261">
    <property type="entry name" value="AAI_SS"/>
    <property type="match status" value="1"/>
</dbReference>
<dbReference type="Gene3D" id="1.10.110.10">
    <property type="entry name" value="Plant lipid-transfer and hydrophobic proteins"/>
    <property type="match status" value="1"/>
</dbReference>
<dbReference type="InterPro" id="IPR006106">
    <property type="entry name" value="Allergen/soft/tryp_amyl_inhib"/>
</dbReference>
<dbReference type="InterPro" id="IPR006105">
    <property type="entry name" value="Allergen/tryp_amyl_inhib_CS"/>
</dbReference>
<dbReference type="InterPro" id="IPR036312">
    <property type="entry name" value="Bifun_inhib/LTP/seed_sf"/>
</dbReference>
<dbReference type="InterPro" id="IPR016140">
    <property type="entry name" value="Bifunc_inhib/LTP/seed_store"/>
</dbReference>
<dbReference type="PANTHER" id="PTHR34481:SF11">
    <property type="entry name" value="BIFUNCTIONAL INHIBITOR_PLANT LIPID TRANSFER PROTEIN_SEED STORAGE HELICAL DOMAIN-CONTAINING PROTEIN"/>
    <property type="match status" value="1"/>
</dbReference>
<dbReference type="PANTHER" id="PTHR34481">
    <property type="entry name" value="TRYPSIN/FACTOR XIIA INHIBITOR-RELATED"/>
    <property type="match status" value="1"/>
</dbReference>
<dbReference type="Pfam" id="PF00234">
    <property type="entry name" value="Tryp_alpha_amyl"/>
    <property type="match status" value="1"/>
</dbReference>
<dbReference type="PRINTS" id="PR00808">
    <property type="entry name" value="AMLASEINHBTR"/>
</dbReference>
<dbReference type="SMART" id="SM00499">
    <property type="entry name" value="AAI"/>
    <property type="match status" value="1"/>
</dbReference>
<dbReference type="SUPFAM" id="SSF47699">
    <property type="entry name" value="Bifunctional inhibitor/lipid-transfer protein/seed storage 2S albumin"/>
    <property type="match status" value="1"/>
</dbReference>
<dbReference type="PROSITE" id="PS00426">
    <property type="entry name" value="CEREAL_TRYP_AMYL_INH"/>
    <property type="match status" value="1"/>
</dbReference>
<evidence type="ECO:0000250" key="1"/>
<evidence type="ECO:0000305" key="2"/>
<protein>
    <recommendedName>
        <fullName>Alpha-amylase inhibitor 5</fullName>
    </recommendedName>
    <alternativeName>
        <fullName>SI alpha-5</fullName>
    </alternativeName>
</protein>
<keyword id="KW-0022">Alpha-amylase inhibitor</keyword>
<keyword id="KW-0903">Direct protein sequencing</keyword>
<keyword id="KW-1015">Disulfide bond</keyword>
<keyword id="KW-0964">Secreted</keyword>
<reference key="1">
    <citation type="journal article" date="1992" name="Protein Seq. Data Anal.">
        <title>The amino acid sequences of two 13-kDa alpha-amylase inhibitors from the seeds of Sorghum bicolor (L.) Moench.</title>
        <authorList>
            <person name="Bloch C. Jr."/>
            <person name="Richardson M."/>
        </authorList>
    </citation>
    <scope>PROTEIN SEQUENCE</scope>
    <source>
        <strain>cv. French red</strain>
        <tissue>Seed</tissue>
    </source>
</reference>
<proteinExistence type="evidence at protein level"/>
<accession>P81368</accession>